<protein>
    <recommendedName>
        <fullName evidence="1">Acetate kinase</fullName>
        <ecNumber evidence="1">2.7.2.1</ecNumber>
    </recommendedName>
    <alternativeName>
        <fullName evidence="1">Acetokinase</fullName>
    </alternativeName>
</protein>
<accession>A4Y819</accession>
<keyword id="KW-0067">ATP-binding</keyword>
<keyword id="KW-0963">Cytoplasm</keyword>
<keyword id="KW-0418">Kinase</keyword>
<keyword id="KW-0460">Magnesium</keyword>
<keyword id="KW-0479">Metal-binding</keyword>
<keyword id="KW-0547">Nucleotide-binding</keyword>
<keyword id="KW-0808">Transferase</keyword>
<evidence type="ECO:0000255" key="1">
    <source>
        <dbReference type="HAMAP-Rule" id="MF_00020"/>
    </source>
</evidence>
<proteinExistence type="inferred from homology"/>
<feature type="chain" id="PRO_1000002256" description="Acetate kinase">
    <location>
        <begin position="1"/>
        <end position="400"/>
    </location>
</feature>
<feature type="active site" description="Proton donor/acceptor" evidence="1">
    <location>
        <position position="148"/>
    </location>
</feature>
<feature type="binding site" evidence="1">
    <location>
        <position position="10"/>
    </location>
    <ligand>
        <name>Mg(2+)</name>
        <dbReference type="ChEBI" id="CHEBI:18420"/>
    </ligand>
</feature>
<feature type="binding site" evidence="1">
    <location>
        <position position="17"/>
    </location>
    <ligand>
        <name>ATP</name>
        <dbReference type="ChEBI" id="CHEBI:30616"/>
    </ligand>
</feature>
<feature type="binding site" evidence="1">
    <location>
        <position position="91"/>
    </location>
    <ligand>
        <name>substrate</name>
    </ligand>
</feature>
<feature type="binding site" evidence="1">
    <location>
        <begin position="208"/>
        <end position="212"/>
    </location>
    <ligand>
        <name>ATP</name>
        <dbReference type="ChEBI" id="CHEBI:30616"/>
    </ligand>
</feature>
<feature type="binding site" evidence="1">
    <location>
        <begin position="283"/>
        <end position="285"/>
    </location>
    <ligand>
        <name>ATP</name>
        <dbReference type="ChEBI" id="CHEBI:30616"/>
    </ligand>
</feature>
<feature type="binding site" evidence="1">
    <location>
        <begin position="331"/>
        <end position="335"/>
    </location>
    <ligand>
        <name>ATP</name>
        <dbReference type="ChEBI" id="CHEBI:30616"/>
    </ligand>
</feature>
<feature type="binding site" evidence="1">
    <location>
        <position position="385"/>
    </location>
    <ligand>
        <name>Mg(2+)</name>
        <dbReference type="ChEBI" id="CHEBI:18420"/>
    </ligand>
</feature>
<feature type="site" description="Transition state stabilizer" evidence="1">
    <location>
        <position position="180"/>
    </location>
</feature>
<feature type="site" description="Transition state stabilizer" evidence="1">
    <location>
        <position position="241"/>
    </location>
</feature>
<organism>
    <name type="scientific">Shewanella putrefaciens (strain CN-32 / ATCC BAA-453)</name>
    <dbReference type="NCBI Taxonomy" id="319224"/>
    <lineage>
        <taxon>Bacteria</taxon>
        <taxon>Pseudomonadati</taxon>
        <taxon>Pseudomonadota</taxon>
        <taxon>Gammaproteobacteria</taxon>
        <taxon>Alteromonadales</taxon>
        <taxon>Shewanellaceae</taxon>
        <taxon>Shewanella</taxon>
    </lineage>
</organism>
<name>ACKA_SHEPC</name>
<sequence>MSNKLVLVLNCGSSSLKFAVIDAQTGDDQISGLAECFGLEDSRIKWKINGEKQEAALGAFTAHREAVEFIVNKILAGQPELAAQIQAVGHRIVHGGEKFTRSVIIDDSVIKGIEDCASLAPLHNPAHLIGIRAAMASFPKLPQVAVFDTAFHQSMPDRAYVYALPYKLYREHGIRRYGMHGTSHLFVSREAAKMLNKPLAETNVICAHLGNGASVTAVKGGKSVDTSMGLTPLEGLVMGTRCGDIDPSIIYHLVHQLGYTLEEVNNLMNKQSGLLGISELTNDCRGIEEGYADGHKGATLALEIFCYRLAKYIASYTVPLGRLDAVVFTGGIGENSDLIREKVLNLLEIFNFHVDSERNKAARFGKKGIITQDNSTVAMVIPTNEEWVIAEDSIKLINKE</sequence>
<comment type="function">
    <text evidence="1">Catalyzes the formation of acetyl phosphate from acetate and ATP. Can also catalyze the reverse reaction.</text>
</comment>
<comment type="catalytic activity">
    <reaction evidence="1">
        <text>acetate + ATP = acetyl phosphate + ADP</text>
        <dbReference type="Rhea" id="RHEA:11352"/>
        <dbReference type="ChEBI" id="CHEBI:22191"/>
        <dbReference type="ChEBI" id="CHEBI:30089"/>
        <dbReference type="ChEBI" id="CHEBI:30616"/>
        <dbReference type="ChEBI" id="CHEBI:456216"/>
        <dbReference type="EC" id="2.7.2.1"/>
    </reaction>
</comment>
<comment type="cofactor">
    <cofactor evidence="1">
        <name>Mg(2+)</name>
        <dbReference type="ChEBI" id="CHEBI:18420"/>
    </cofactor>
    <cofactor evidence="1">
        <name>Mn(2+)</name>
        <dbReference type="ChEBI" id="CHEBI:29035"/>
    </cofactor>
    <text evidence="1">Mg(2+). Can also accept Mn(2+).</text>
</comment>
<comment type="pathway">
    <text evidence="1">Metabolic intermediate biosynthesis; acetyl-CoA biosynthesis; acetyl-CoA from acetate: step 1/2.</text>
</comment>
<comment type="subunit">
    <text evidence="1">Homodimer.</text>
</comment>
<comment type="subcellular location">
    <subcellularLocation>
        <location evidence="1">Cytoplasm</location>
    </subcellularLocation>
</comment>
<comment type="similarity">
    <text evidence="1">Belongs to the acetokinase family.</text>
</comment>
<reference key="1">
    <citation type="submission" date="2007-04" db="EMBL/GenBank/DDBJ databases">
        <title>Complete sequence of Shewanella putrefaciens CN-32.</title>
        <authorList>
            <consortium name="US DOE Joint Genome Institute"/>
            <person name="Copeland A."/>
            <person name="Lucas S."/>
            <person name="Lapidus A."/>
            <person name="Barry K."/>
            <person name="Detter J.C."/>
            <person name="Glavina del Rio T."/>
            <person name="Hammon N."/>
            <person name="Israni S."/>
            <person name="Dalin E."/>
            <person name="Tice H."/>
            <person name="Pitluck S."/>
            <person name="Chain P."/>
            <person name="Malfatti S."/>
            <person name="Shin M."/>
            <person name="Vergez L."/>
            <person name="Schmutz J."/>
            <person name="Larimer F."/>
            <person name="Land M."/>
            <person name="Hauser L."/>
            <person name="Kyrpides N."/>
            <person name="Mikhailova N."/>
            <person name="Romine M.F."/>
            <person name="Fredrickson J."/>
            <person name="Tiedje J."/>
            <person name="Richardson P."/>
        </authorList>
    </citation>
    <scope>NUCLEOTIDE SEQUENCE [LARGE SCALE GENOMIC DNA]</scope>
    <source>
        <strain>CN-32 / ATCC BAA-453</strain>
    </source>
</reference>
<dbReference type="EC" id="2.7.2.1" evidence="1"/>
<dbReference type="EMBL" id="CP000681">
    <property type="protein sequence ID" value="ABP76102.1"/>
    <property type="molecule type" value="Genomic_DNA"/>
</dbReference>
<dbReference type="SMR" id="A4Y819"/>
<dbReference type="STRING" id="319224.Sputcn32_2381"/>
<dbReference type="KEGG" id="spc:Sputcn32_2381"/>
<dbReference type="eggNOG" id="COG0282">
    <property type="taxonomic scope" value="Bacteria"/>
</dbReference>
<dbReference type="HOGENOM" id="CLU_020352_0_1_6"/>
<dbReference type="UniPathway" id="UPA00340">
    <property type="reaction ID" value="UER00458"/>
</dbReference>
<dbReference type="GO" id="GO:0005829">
    <property type="term" value="C:cytosol"/>
    <property type="evidence" value="ECO:0007669"/>
    <property type="project" value="TreeGrafter"/>
</dbReference>
<dbReference type="GO" id="GO:0008776">
    <property type="term" value="F:acetate kinase activity"/>
    <property type="evidence" value="ECO:0007669"/>
    <property type="project" value="UniProtKB-UniRule"/>
</dbReference>
<dbReference type="GO" id="GO:0005524">
    <property type="term" value="F:ATP binding"/>
    <property type="evidence" value="ECO:0007669"/>
    <property type="project" value="UniProtKB-KW"/>
</dbReference>
<dbReference type="GO" id="GO:0000287">
    <property type="term" value="F:magnesium ion binding"/>
    <property type="evidence" value="ECO:0007669"/>
    <property type="project" value="UniProtKB-UniRule"/>
</dbReference>
<dbReference type="GO" id="GO:0006083">
    <property type="term" value="P:acetate metabolic process"/>
    <property type="evidence" value="ECO:0007669"/>
    <property type="project" value="TreeGrafter"/>
</dbReference>
<dbReference type="GO" id="GO:0006085">
    <property type="term" value="P:acetyl-CoA biosynthetic process"/>
    <property type="evidence" value="ECO:0007669"/>
    <property type="project" value="UniProtKB-UniRule"/>
</dbReference>
<dbReference type="CDD" id="cd24010">
    <property type="entry name" value="ASKHA_NBD_AcK_PK"/>
    <property type="match status" value="1"/>
</dbReference>
<dbReference type="FunFam" id="3.30.420.40:FF:000041">
    <property type="entry name" value="Acetate kinase"/>
    <property type="match status" value="1"/>
</dbReference>
<dbReference type="Gene3D" id="3.30.420.40">
    <property type="match status" value="2"/>
</dbReference>
<dbReference type="HAMAP" id="MF_00020">
    <property type="entry name" value="Acetate_kinase"/>
    <property type="match status" value="1"/>
</dbReference>
<dbReference type="InterPro" id="IPR004372">
    <property type="entry name" value="Ac/propionate_kinase"/>
</dbReference>
<dbReference type="InterPro" id="IPR000890">
    <property type="entry name" value="Aliphatic_acid_kin_short-chain"/>
</dbReference>
<dbReference type="InterPro" id="IPR023865">
    <property type="entry name" value="Aliphatic_acid_kinase_CS"/>
</dbReference>
<dbReference type="InterPro" id="IPR043129">
    <property type="entry name" value="ATPase_NBD"/>
</dbReference>
<dbReference type="NCBIfam" id="TIGR00016">
    <property type="entry name" value="ackA"/>
    <property type="match status" value="1"/>
</dbReference>
<dbReference type="PANTHER" id="PTHR21060">
    <property type="entry name" value="ACETATE KINASE"/>
    <property type="match status" value="1"/>
</dbReference>
<dbReference type="PANTHER" id="PTHR21060:SF21">
    <property type="entry name" value="ACETATE KINASE"/>
    <property type="match status" value="1"/>
</dbReference>
<dbReference type="Pfam" id="PF00871">
    <property type="entry name" value="Acetate_kinase"/>
    <property type="match status" value="1"/>
</dbReference>
<dbReference type="PIRSF" id="PIRSF000722">
    <property type="entry name" value="Acetate_prop_kin"/>
    <property type="match status" value="1"/>
</dbReference>
<dbReference type="PRINTS" id="PR00471">
    <property type="entry name" value="ACETATEKNASE"/>
</dbReference>
<dbReference type="SUPFAM" id="SSF53067">
    <property type="entry name" value="Actin-like ATPase domain"/>
    <property type="match status" value="2"/>
</dbReference>
<dbReference type="PROSITE" id="PS01075">
    <property type="entry name" value="ACETATE_KINASE_1"/>
    <property type="match status" value="1"/>
</dbReference>
<dbReference type="PROSITE" id="PS01076">
    <property type="entry name" value="ACETATE_KINASE_2"/>
    <property type="match status" value="1"/>
</dbReference>
<gene>
    <name evidence="1" type="primary">ackA</name>
    <name type="ordered locus">Sputcn32_2381</name>
</gene>